<protein>
    <recommendedName>
        <fullName evidence="1">4-hydroxy-3-methylbut-2-en-1-yl diphosphate synthase (flavodoxin)</fullName>
        <ecNumber evidence="1">1.17.7.3</ecNumber>
    </recommendedName>
    <alternativeName>
        <fullName evidence="1">1-hydroxy-2-methyl-2-(E)-butenyl 4-diphosphate synthase</fullName>
    </alternativeName>
</protein>
<dbReference type="EC" id="1.17.7.3" evidence="1"/>
<dbReference type="EMBL" id="AM889285">
    <property type="protein sequence ID" value="CAP55856.1"/>
    <property type="molecule type" value="Genomic_DNA"/>
</dbReference>
<dbReference type="EMBL" id="CP001189">
    <property type="protein sequence ID" value="ACI49935.1"/>
    <property type="molecule type" value="Genomic_DNA"/>
</dbReference>
<dbReference type="RefSeq" id="WP_012225530.1">
    <property type="nucleotide sequence ID" value="NC_010125.1"/>
</dbReference>
<dbReference type="SMR" id="A9HJ48"/>
<dbReference type="STRING" id="272568.GDI1913"/>
<dbReference type="KEGG" id="gdi:GDI1913"/>
<dbReference type="KEGG" id="gdj:Gdia_0135"/>
<dbReference type="eggNOG" id="COG0821">
    <property type="taxonomic scope" value="Bacteria"/>
</dbReference>
<dbReference type="HOGENOM" id="CLU_042258_0_0_5"/>
<dbReference type="OrthoDB" id="9803214at2"/>
<dbReference type="UniPathway" id="UPA00056">
    <property type="reaction ID" value="UER00096"/>
</dbReference>
<dbReference type="Proteomes" id="UP000001176">
    <property type="component" value="Chromosome"/>
</dbReference>
<dbReference type="GO" id="GO:0051539">
    <property type="term" value="F:4 iron, 4 sulfur cluster binding"/>
    <property type="evidence" value="ECO:0007669"/>
    <property type="project" value="UniProtKB-UniRule"/>
</dbReference>
<dbReference type="GO" id="GO:0046429">
    <property type="term" value="F:4-hydroxy-3-methylbut-2-en-1-yl diphosphate synthase activity (ferredoxin)"/>
    <property type="evidence" value="ECO:0007669"/>
    <property type="project" value="UniProtKB-UniRule"/>
</dbReference>
<dbReference type="GO" id="GO:0141197">
    <property type="term" value="F:4-hydroxy-3-methylbut-2-enyl-diphosphate synthase activity (flavodoxin)"/>
    <property type="evidence" value="ECO:0007669"/>
    <property type="project" value="UniProtKB-EC"/>
</dbReference>
<dbReference type="GO" id="GO:0005506">
    <property type="term" value="F:iron ion binding"/>
    <property type="evidence" value="ECO:0007669"/>
    <property type="project" value="InterPro"/>
</dbReference>
<dbReference type="GO" id="GO:0019288">
    <property type="term" value="P:isopentenyl diphosphate biosynthetic process, methylerythritol 4-phosphate pathway"/>
    <property type="evidence" value="ECO:0007669"/>
    <property type="project" value="UniProtKB-UniRule"/>
</dbReference>
<dbReference type="GO" id="GO:0016114">
    <property type="term" value="P:terpenoid biosynthetic process"/>
    <property type="evidence" value="ECO:0007669"/>
    <property type="project" value="InterPro"/>
</dbReference>
<dbReference type="FunFam" id="3.20.20.20:FF:000001">
    <property type="entry name" value="4-hydroxy-3-methylbut-2-en-1-yl diphosphate synthase (flavodoxin)"/>
    <property type="match status" value="1"/>
</dbReference>
<dbReference type="Gene3D" id="3.20.20.20">
    <property type="entry name" value="Dihydropteroate synthase-like"/>
    <property type="match status" value="1"/>
</dbReference>
<dbReference type="Gene3D" id="3.30.413.10">
    <property type="entry name" value="Sulfite Reductase Hemoprotein, domain 1"/>
    <property type="match status" value="1"/>
</dbReference>
<dbReference type="HAMAP" id="MF_00159">
    <property type="entry name" value="IspG"/>
    <property type="match status" value="1"/>
</dbReference>
<dbReference type="InterPro" id="IPR011005">
    <property type="entry name" value="Dihydropteroate_synth-like_sf"/>
</dbReference>
<dbReference type="InterPro" id="IPR016425">
    <property type="entry name" value="IspG_bac"/>
</dbReference>
<dbReference type="InterPro" id="IPR004588">
    <property type="entry name" value="IspG_bac-typ"/>
</dbReference>
<dbReference type="InterPro" id="IPR045854">
    <property type="entry name" value="NO2/SO3_Rdtase_4Fe4S_sf"/>
</dbReference>
<dbReference type="NCBIfam" id="TIGR00612">
    <property type="entry name" value="ispG_gcpE"/>
    <property type="match status" value="1"/>
</dbReference>
<dbReference type="NCBIfam" id="NF001540">
    <property type="entry name" value="PRK00366.1"/>
    <property type="match status" value="1"/>
</dbReference>
<dbReference type="PANTHER" id="PTHR30454">
    <property type="entry name" value="4-HYDROXY-3-METHYLBUT-2-EN-1-YL DIPHOSPHATE SYNTHASE"/>
    <property type="match status" value="1"/>
</dbReference>
<dbReference type="PANTHER" id="PTHR30454:SF0">
    <property type="entry name" value="4-HYDROXY-3-METHYLBUT-2-EN-1-YL DIPHOSPHATE SYNTHASE (FERREDOXIN), CHLOROPLASTIC"/>
    <property type="match status" value="1"/>
</dbReference>
<dbReference type="Pfam" id="PF04551">
    <property type="entry name" value="GcpE"/>
    <property type="match status" value="1"/>
</dbReference>
<dbReference type="PIRSF" id="PIRSF004640">
    <property type="entry name" value="IspG"/>
    <property type="match status" value="1"/>
</dbReference>
<dbReference type="SUPFAM" id="SSF51412">
    <property type="entry name" value="Inosine monophosphate dehydrogenase (IMPDH)"/>
    <property type="match status" value="1"/>
</dbReference>
<dbReference type="SUPFAM" id="SSF56014">
    <property type="entry name" value="Nitrite and sulphite reductase 4Fe-4S domain-like"/>
    <property type="match status" value="1"/>
</dbReference>
<comment type="function">
    <text evidence="1">Converts 2C-methyl-D-erythritol 2,4-cyclodiphosphate (ME-2,4cPP) into 1-hydroxy-2-methyl-2-(E)-butenyl 4-diphosphate.</text>
</comment>
<comment type="catalytic activity">
    <reaction evidence="1">
        <text>(2E)-4-hydroxy-3-methylbut-2-enyl diphosphate + oxidized [flavodoxin] + H2O + 2 H(+) = 2-C-methyl-D-erythritol 2,4-cyclic diphosphate + reduced [flavodoxin]</text>
        <dbReference type="Rhea" id="RHEA:43604"/>
        <dbReference type="Rhea" id="RHEA-COMP:10622"/>
        <dbReference type="Rhea" id="RHEA-COMP:10623"/>
        <dbReference type="ChEBI" id="CHEBI:15377"/>
        <dbReference type="ChEBI" id="CHEBI:15378"/>
        <dbReference type="ChEBI" id="CHEBI:57618"/>
        <dbReference type="ChEBI" id="CHEBI:58210"/>
        <dbReference type="ChEBI" id="CHEBI:58483"/>
        <dbReference type="ChEBI" id="CHEBI:128753"/>
        <dbReference type="EC" id="1.17.7.3"/>
    </reaction>
</comment>
<comment type="cofactor">
    <cofactor evidence="1">
        <name>[4Fe-4S] cluster</name>
        <dbReference type="ChEBI" id="CHEBI:49883"/>
    </cofactor>
    <text evidence="1">Binds 1 [4Fe-4S] cluster.</text>
</comment>
<comment type="pathway">
    <text evidence="1">Isoprenoid biosynthesis; isopentenyl diphosphate biosynthesis via DXP pathway; isopentenyl diphosphate from 1-deoxy-D-xylulose 5-phosphate: step 5/6.</text>
</comment>
<comment type="similarity">
    <text evidence="1">Belongs to the IspG family.</text>
</comment>
<keyword id="KW-0004">4Fe-4S</keyword>
<keyword id="KW-0408">Iron</keyword>
<keyword id="KW-0411">Iron-sulfur</keyword>
<keyword id="KW-0414">Isoprene biosynthesis</keyword>
<keyword id="KW-0479">Metal-binding</keyword>
<keyword id="KW-0560">Oxidoreductase</keyword>
<keyword id="KW-1185">Reference proteome</keyword>
<organism>
    <name type="scientific">Gluconacetobacter diazotrophicus (strain ATCC 49037 / DSM 5601 / CCUG 37298 / CIP 103539 / LMG 7603 / PAl5)</name>
    <dbReference type="NCBI Taxonomy" id="272568"/>
    <lineage>
        <taxon>Bacteria</taxon>
        <taxon>Pseudomonadati</taxon>
        <taxon>Pseudomonadota</taxon>
        <taxon>Alphaproteobacteria</taxon>
        <taxon>Acetobacterales</taxon>
        <taxon>Acetobacteraceae</taxon>
        <taxon>Gluconacetobacter</taxon>
    </lineage>
</organism>
<sequence>MSSYRPYQSIERRKSRQIHVGKVPVGGDAPISVQTMTNTLTTDAEATIAQIRRAELAGVDIVRVSCPDEESTAALAEIVREVNVPIVADIHFHYKRAIEAAQAGAACLRINPGNIGSAERVREVVKAAREHGCSIRIGVNAGSLEKHLLEKYGEPNPDALVESALEHAKILQDHDFHEFKISVKASDVFLAVAAYQQLAEVCDHPLHIGITEAGSKRAGTVKSSIGLGNLLWAGVGDTMRVSLSADPEEEVLVGWDILKSLGLRHRGVKIISCPSCARQGFNVIQTVQTLEERLAHIQTPLTLSIIGCVVNGPGEALMTDIGVTGGGSGRHMVYAAGRQDHTVPADSMIEHIVELVEKKAEILRAEEAAAKAEAEAALAPAQ</sequence>
<feature type="chain" id="PRO_1000076885" description="4-hydroxy-3-methylbut-2-en-1-yl diphosphate synthase (flavodoxin)">
    <location>
        <begin position="1"/>
        <end position="382"/>
    </location>
</feature>
<feature type="binding site" evidence="1">
    <location>
        <position position="273"/>
    </location>
    <ligand>
        <name>[4Fe-4S] cluster</name>
        <dbReference type="ChEBI" id="CHEBI:49883"/>
    </ligand>
</feature>
<feature type="binding site" evidence="1">
    <location>
        <position position="276"/>
    </location>
    <ligand>
        <name>[4Fe-4S] cluster</name>
        <dbReference type="ChEBI" id="CHEBI:49883"/>
    </ligand>
</feature>
<feature type="binding site" evidence="1">
    <location>
        <position position="308"/>
    </location>
    <ligand>
        <name>[4Fe-4S] cluster</name>
        <dbReference type="ChEBI" id="CHEBI:49883"/>
    </ligand>
</feature>
<feature type="binding site" evidence="1">
    <location>
        <position position="315"/>
    </location>
    <ligand>
        <name>[4Fe-4S] cluster</name>
        <dbReference type="ChEBI" id="CHEBI:49883"/>
    </ligand>
</feature>
<evidence type="ECO:0000255" key="1">
    <source>
        <dbReference type="HAMAP-Rule" id="MF_00159"/>
    </source>
</evidence>
<reference key="1">
    <citation type="journal article" date="2009" name="BMC Genomics">
        <title>Complete genome sequence of the sugarcane nitrogen-fixing endophyte Gluconacetobacter diazotrophicus Pal5.</title>
        <authorList>
            <person name="Bertalan M."/>
            <person name="Albano R."/>
            <person name="de Padua V."/>
            <person name="Rouws L."/>
            <person name="Rojas C."/>
            <person name="Hemerly A."/>
            <person name="Teixeira K."/>
            <person name="Schwab S."/>
            <person name="Araujo J."/>
            <person name="Oliveira A."/>
            <person name="Franca L."/>
            <person name="Magalhaes V."/>
            <person name="Alqueres S."/>
            <person name="Cardoso A."/>
            <person name="Almeida W."/>
            <person name="Loureiro M.M."/>
            <person name="Nogueira E."/>
            <person name="Cidade D."/>
            <person name="Oliveira D."/>
            <person name="Simao T."/>
            <person name="Macedo J."/>
            <person name="Valadao A."/>
            <person name="Dreschsel M."/>
            <person name="Freitas F."/>
            <person name="Vidal M."/>
            <person name="Guedes H."/>
            <person name="Rodrigues E."/>
            <person name="Meneses C."/>
            <person name="Brioso P."/>
            <person name="Pozzer L."/>
            <person name="Figueiredo D."/>
            <person name="Montano H."/>
            <person name="Junior J."/>
            <person name="de Souza Filho G."/>
            <person name="Martin Quintana Flores V."/>
            <person name="Ferreira B."/>
            <person name="Branco A."/>
            <person name="Gonzalez P."/>
            <person name="Guillobel H."/>
            <person name="Lemos M."/>
            <person name="Seibel L."/>
            <person name="Macedo J."/>
            <person name="Alves-Ferreira M."/>
            <person name="Sachetto-Martins G."/>
            <person name="Coelho A."/>
            <person name="Santos E."/>
            <person name="Amaral G."/>
            <person name="Neves A."/>
            <person name="Pacheco A.B."/>
            <person name="Carvalho D."/>
            <person name="Lery L."/>
            <person name="Bisch P."/>
            <person name="Rossle S.C."/>
            <person name="Urmenyi T."/>
            <person name="Rael Pereira A."/>
            <person name="Silva R."/>
            <person name="Rondinelli E."/>
            <person name="von Kruger W."/>
            <person name="Martins O."/>
            <person name="Baldani J.I."/>
            <person name="Ferreira P.C."/>
        </authorList>
    </citation>
    <scope>NUCLEOTIDE SEQUENCE [LARGE SCALE GENOMIC DNA]</scope>
    <source>
        <strain>ATCC 49037 / DSM 5601 / CCUG 37298 / CIP 103539 / LMG 7603 / PAl5</strain>
    </source>
</reference>
<reference key="2">
    <citation type="journal article" date="2010" name="Stand. Genomic Sci.">
        <title>Two genome sequences of the same bacterial strain, Gluconacetobacter diazotrophicus PAl 5, suggest a new standard in genome sequence submission.</title>
        <authorList>
            <person name="Giongo A."/>
            <person name="Tyler H.L."/>
            <person name="Zipperer U.N."/>
            <person name="Triplett E.W."/>
        </authorList>
    </citation>
    <scope>NUCLEOTIDE SEQUENCE [LARGE SCALE GENOMIC DNA]</scope>
    <source>
        <strain>ATCC 49037 / DSM 5601 / CCUG 37298 / CIP 103539 / LMG 7603 / PAl5</strain>
    </source>
</reference>
<accession>A9HJ48</accession>
<accession>B5ZJZ6</accession>
<gene>
    <name evidence="1" type="primary">ispG</name>
    <name type="ordered locus">GDI1913</name>
    <name type="ordered locus">Gdia_0135</name>
</gene>
<name>ISPG_GLUDA</name>
<proteinExistence type="inferred from homology"/>